<organism>
    <name type="scientific">Achromobacter lyticus</name>
    <dbReference type="NCBI Taxonomy" id="224"/>
    <lineage>
        <taxon>Bacteria</taxon>
        <taxon>Pseudomonadati</taxon>
        <taxon>Pseudomonadota</taxon>
        <taxon>Betaproteobacteria</taxon>
        <taxon>Burkholderiales</taxon>
        <taxon>Alcaligenaceae</taxon>
        <taxon>Achromobacter</taxon>
    </lineage>
</organism>
<evidence type="ECO:0000250" key="1"/>
<evidence type="ECO:0000255" key="2"/>
<evidence type="ECO:0000255" key="3">
    <source>
        <dbReference type="PROSITE-ProRule" id="PRU00151"/>
    </source>
</evidence>
<evidence type="ECO:0000255" key="4">
    <source>
        <dbReference type="PROSITE-ProRule" id="PRU01173"/>
    </source>
</evidence>
<evidence type="ECO:0000269" key="5">
    <source>
    </source>
</evidence>
<evidence type="ECO:0000305" key="6"/>
<evidence type="ECO:0007829" key="7">
    <source>
        <dbReference type="PDB" id="1ARB"/>
    </source>
</evidence>
<sequence>MKRICGSLLLLGLSISAALAAPASRPAAFDYANLSSVDKVALRTMPAVDVAKAKAEDLQRDKRGDIPRFALAIDVDMTPQNSGAWEYTADGQFAVWRQRVRSEKALSLNFGFTDYYMPAGGRLLVYPATQAPAGDRGLISQYDASNNNSARQLWTAVVPGAEAVIEAVIPRDKVGEFKLRLTKVNHDYVGFGPLARRLAAASGEKGVSGSCNIDVVCPEGDGRRDIIRAVGAYSKSGTLACTGSLVNNTANDRKMYFLTAHHCGMGTASTAASIVVYWNYQNSTCRAPNTPASGANGDGSMSQTQSGSTVKATYATSDFTLLELNNAANPAFNLFWAGWDRRDQNYPGAIAIHHPNVAEKRISNSTSPTSFVAWGGGAGTTHLNVQWQPSGGVTEPGSSGSPIYSPEKRVLGQLHGGPSSCSATGTNRSDQYGRVFTSWTGGGAAASRLSDWLDPASTGAQFIDGLDSGGGTPNTPPVANFTSTTSGLTATFTDSSTDSDGSIASRSWNFGDGSTSTATNPSKTYAAAGTYTVTLTVTDNGGATNTKTGSVTVSGGPGAQTYTNDTDVAIPDNATVESPITVSGRTGNGSATTPIQVTIYHTYKSDLKVDLVAPDGTVYNLHNRTGGSAHNIIQTFTKDLSSEAAQRAPGSCG</sequence>
<protein>
    <recommendedName>
        <fullName>Protease 1</fullName>
        <ecNumber>3.4.21.50</ecNumber>
    </recommendedName>
    <alternativeName>
        <fullName>API</fullName>
    </alternativeName>
    <alternativeName>
        <fullName>Lysyl endopeptidase</fullName>
    </alternativeName>
    <alternativeName>
        <fullName>Protease I</fullName>
    </alternativeName>
</protein>
<keyword id="KW-0002">3D-structure</keyword>
<keyword id="KW-0903">Direct protein sequencing</keyword>
<keyword id="KW-1015">Disulfide bond</keyword>
<keyword id="KW-0378">Hydrolase</keyword>
<keyword id="KW-0645">Protease</keyword>
<keyword id="KW-0964">Secreted</keyword>
<keyword id="KW-0720">Serine protease</keyword>
<keyword id="KW-0732">Signal</keyword>
<keyword id="KW-0865">Zymogen</keyword>
<feature type="signal peptide" description="Or 27" evidence="2">
    <location>
        <begin position="1"/>
        <end position="20"/>
    </location>
</feature>
<feature type="propeptide" id="PRO_0000028515" evidence="5">
    <location>
        <begin position="21"/>
        <end position="205"/>
    </location>
</feature>
<feature type="chain" id="PRO_0000028516" description="Protease 1">
    <location>
        <begin position="206"/>
        <end position="473"/>
    </location>
</feature>
<feature type="propeptide" id="PRO_0000028517" description="Thr/Ser-rich">
    <location>
        <begin position="474"/>
        <end position="653"/>
    </location>
</feature>
<feature type="domain" description="PKD" evidence="3">
    <location>
        <begin position="474"/>
        <end position="553"/>
    </location>
</feature>
<feature type="domain" description="P/Homo B" evidence="4">
    <location>
        <begin position="555"/>
        <end position="653"/>
    </location>
</feature>
<feature type="active site" description="Charge relay system" evidence="1">
    <location>
        <position position="262"/>
    </location>
</feature>
<feature type="active site" description="Charge relay system" evidence="1">
    <location>
        <position position="318"/>
    </location>
</feature>
<feature type="active site" description="Charge relay system" evidence="1">
    <location>
        <position position="399"/>
    </location>
</feature>
<feature type="disulfide bond" evidence="5">
    <location>
        <begin position="211"/>
        <end position="421"/>
    </location>
</feature>
<feature type="disulfide bond" evidence="5">
    <location>
        <begin position="217"/>
        <end position="285"/>
    </location>
</feature>
<feature type="disulfide bond" evidence="5">
    <location>
        <begin position="241"/>
        <end position="263"/>
    </location>
</feature>
<feature type="helix" evidence="7">
    <location>
        <begin position="218"/>
        <end position="220"/>
    </location>
</feature>
<feature type="helix" evidence="7">
    <location>
        <begin position="226"/>
        <end position="229"/>
    </location>
</feature>
<feature type="strand" evidence="7">
    <location>
        <begin position="230"/>
        <end position="235"/>
    </location>
</feature>
<feature type="strand" evidence="7">
    <location>
        <begin position="238"/>
        <end position="246"/>
    </location>
</feature>
<feature type="strand" evidence="7">
    <location>
        <begin position="256"/>
        <end position="260"/>
    </location>
</feature>
<feature type="helix" evidence="7">
    <location>
        <begin position="261"/>
        <end position="263"/>
    </location>
</feature>
<feature type="helix" evidence="7">
    <location>
        <begin position="268"/>
        <end position="272"/>
    </location>
</feature>
<feature type="strand" evidence="7">
    <location>
        <begin position="275"/>
        <end position="277"/>
    </location>
</feature>
<feature type="helix" evidence="7">
    <location>
        <begin position="291"/>
        <end position="294"/>
    </location>
</feature>
<feature type="strand" evidence="7">
    <location>
        <begin position="304"/>
        <end position="306"/>
    </location>
</feature>
<feature type="strand" evidence="7">
    <location>
        <begin position="308"/>
        <end position="314"/>
    </location>
</feature>
<feature type="turn" evidence="7">
    <location>
        <begin position="315"/>
        <end position="318"/>
    </location>
</feature>
<feature type="strand" evidence="7">
    <location>
        <begin position="319"/>
        <end position="326"/>
    </location>
</feature>
<feature type="helix" evidence="7">
    <location>
        <begin position="330"/>
        <end position="332"/>
    </location>
</feature>
<feature type="strand" evidence="7">
    <location>
        <begin position="335"/>
        <end position="337"/>
    </location>
</feature>
<feature type="strand" evidence="7">
    <location>
        <begin position="349"/>
        <end position="353"/>
    </location>
</feature>
<feature type="helix" evidence="7">
    <location>
        <begin position="355"/>
        <end position="357"/>
    </location>
</feature>
<feature type="strand" evidence="7">
    <location>
        <begin position="361"/>
        <end position="365"/>
    </location>
</feature>
<feature type="strand" evidence="7">
    <location>
        <begin position="370"/>
        <end position="372"/>
    </location>
</feature>
<feature type="strand" evidence="7">
    <location>
        <begin position="376"/>
        <end position="378"/>
    </location>
</feature>
<feature type="strand" evidence="7">
    <location>
        <begin position="380"/>
        <end position="386"/>
    </location>
</feature>
<feature type="strand" evidence="7">
    <location>
        <begin position="402"/>
        <end position="404"/>
    </location>
</feature>
<feature type="strand" evidence="7">
    <location>
        <begin position="410"/>
        <end position="416"/>
    </location>
</feature>
<feature type="helix" evidence="7">
    <location>
        <begin position="425"/>
        <end position="427"/>
    </location>
</feature>
<feature type="strand" evidence="7">
    <location>
        <begin position="428"/>
        <end position="434"/>
    </location>
</feature>
<feature type="helix" evidence="7">
    <location>
        <begin position="435"/>
        <end position="440"/>
    </location>
</feature>
<feature type="helix" evidence="7">
    <location>
        <begin position="445"/>
        <end position="447"/>
    </location>
</feature>
<feature type="helix" evidence="7">
    <location>
        <begin position="450"/>
        <end position="453"/>
    </location>
</feature>
<feature type="strand" evidence="7">
    <location>
        <begin position="461"/>
        <end position="463"/>
    </location>
</feature>
<comment type="catalytic activity">
    <reaction>
        <text>Preferential cleavage: Lys-|-Xaa, including Lys-|-Pro.</text>
        <dbReference type="EC" id="3.4.21.50"/>
    </reaction>
</comment>
<comment type="subcellular location">
    <subcellularLocation>
        <location>Secreted</location>
    </subcellularLocation>
</comment>
<comment type="domain">
    <text>The C-terminal extension has little effect on the function of API.</text>
</comment>
<comment type="PTM">
    <text evidence="5">Three disulfide bonds are present.</text>
</comment>
<comment type="similarity">
    <text evidence="6">Belongs to the peptidase S1 family.</text>
</comment>
<proteinExistence type="evidence at protein level"/>
<dbReference type="EC" id="3.4.21.50"/>
<dbReference type="EMBL" id="J05128">
    <property type="protein sequence ID" value="AAA78946.1"/>
    <property type="molecule type" value="Genomic_DNA"/>
</dbReference>
<dbReference type="PIR" id="A32687">
    <property type="entry name" value="A32687"/>
</dbReference>
<dbReference type="PDB" id="1ARB">
    <property type="method" value="X-ray"/>
    <property type="resolution" value="1.20 A"/>
    <property type="chains" value="A=206-473"/>
</dbReference>
<dbReference type="PDB" id="1ARC">
    <property type="method" value="X-ray"/>
    <property type="resolution" value="2.00 A"/>
    <property type="chains" value="A=206-473"/>
</dbReference>
<dbReference type="PDB" id="4GPG">
    <property type="method" value="Other"/>
    <property type="resolution" value="1.90 A"/>
    <property type="chains" value="A=206-473"/>
</dbReference>
<dbReference type="PDBsum" id="1ARB"/>
<dbReference type="PDBsum" id="1ARC"/>
<dbReference type="PDBsum" id="4GPG"/>
<dbReference type="SMR" id="P15636"/>
<dbReference type="DrugBank" id="DB08603">
    <property type="generic name" value="N-[(1S)-5-amino-1-(chloroacetyl)pentyl]-4-methylbenzenesulfonamide"/>
</dbReference>
<dbReference type="MEROPS" id="S01.280"/>
<dbReference type="KEGG" id="ag:AAA78946"/>
<dbReference type="BRENDA" id="3.4.21.50">
    <property type="organism ID" value="74"/>
</dbReference>
<dbReference type="EvolutionaryTrace" id="P15636"/>
<dbReference type="GO" id="GO:0005576">
    <property type="term" value="C:extracellular region"/>
    <property type="evidence" value="ECO:0007669"/>
    <property type="project" value="UniProtKB-SubCell"/>
</dbReference>
<dbReference type="GO" id="GO:0004252">
    <property type="term" value="F:serine-type endopeptidase activity"/>
    <property type="evidence" value="ECO:0007669"/>
    <property type="project" value="InterPro"/>
</dbReference>
<dbReference type="GO" id="GO:0006508">
    <property type="term" value="P:proteolysis"/>
    <property type="evidence" value="ECO:0007669"/>
    <property type="project" value="UniProtKB-KW"/>
</dbReference>
<dbReference type="CDD" id="cd00146">
    <property type="entry name" value="PKD"/>
    <property type="match status" value="1"/>
</dbReference>
<dbReference type="Gene3D" id="2.60.120.260">
    <property type="entry name" value="Galactose-binding domain-like"/>
    <property type="match status" value="1"/>
</dbReference>
<dbReference type="Gene3D" id="2.60.40.10">
    <property type="entry name" value="Immunoglobulins"/>
    <property type="match status" value="1"/>
</dbReference>
<dbReference type="Gene3D" id="2.40.10.10">
    <property type="entry name" value="Trypsin-like serine proteases"/>
    <property type="match status" value="2"/>
</dbReference>
<dbReference type="InterPro" id="IPR008979">
    <property type="entry name" value="Galactose-bd-like_sf"/>
</dbReference>
<dbReference type="InterPro" id="IPR013783">
    <property type="entry name" value="Ig-like_fold"/>
</dbReference>
<dbReference type="InterPro" id="IPR017323">
    <property type="entry name" value="Lysyl_endo-pept"/>
</dbReference>
<dbReference type="InterPro" id="IPR002884">
    <property type="entry name" value="P_dom"/>
</dbReference>
<dbReference type="InterPro" id="IPR009003">
    <property type="entry name" value="Peptidase_S1_PA"/>
</dbReference>
<dbReference type="InterPro" id="IPR043504">
    <property type="entry name" value="Peptidase_S1_PA_chymotrypsin"/>
</dbReference>
<dbReference type="InterPro" id="IPR022409">
    <property type="entry name" value="PKD/Chitinase_dom"/>
</dbReference>
<dbReference type="InterPro" id="IPR000601">
    <property type="entry name" value="PKD_dom"/>
</dbReference>
<dbReference type="InterPro" id="IPR035986">
    <property type="entry name" value="PKD_dom_sf"/>
</dbReference>
<dbReference type="Pfam" id="PF01483">
    <property type="entry name" value="P_proprotein"/>
    <property type="match status" value="1"/>
</dbReference>
<dbReference type="Pfam" id="PF18911">
    <property type="entry name" value="PKD_4"/>
    <property type="match status" value="1"/>
</dbReference>
<dbReference type="PIRSF" id="PIRSF037930">
    <property type="entry name" value="Lysyl_endopeptidase"/>
    <property type="match status" value="1"/>
</dbReference>
<dbReference type="SMART" id="SM00089">
    <property type="entry name" value="PKD"/>
    <property type="match status" value="1"/>
</dbReference>
<dbReference type="SUPFAM" id="SSF49785">
    <property type="entry name" value="Galactose-binding domain-like"/>
    <property type="match status" value="1"/>
</dbReference>
<dbReference type="SUPFAM" id="SSF49299">
    <property type="entry name" value="PKD domain"/>
    <property type="match status" value="1"/>
</dbReference>
<dbReference type="SUPFAM" id="SSF50494">
    <property type="entry name" value="Trypsin-like serine proteases"/>
    <property type="match status" value="1"/>
</dbReference>
<dbReference type="PROSITE" id="PS51829">
    <property type="entry name" value="P_HOMO_B"/>
    <property type="match status" value="1"/>
</dbReference>
<dbReference type="PROSITE" id="PS50093">
    <property type="entry name" value="PKD"/>
    <property type="match status" value="1"/>
</dbReference>
<accession>P15636</accession>
<name>API_ACHLY</name>
<reference key="1">
    <citation type="journal article" date="1989" name="J. Biol. Chem.">
        <title>Cloning, nucleotide sequence, and expression of Achromobacter protease I gene.</title>
        <authorList>
            <person name="Ohara T."/>
            <person name="Makino K."/>
            <person name="Shinagawa H."/>
            <person name="Nakata A."/>
            <person name="Norioka S."/>
            <person name="Sakiyama F."/>
        </authorList>
    </citation>
    <scope>NUCLEOTIDE SEQUENCE [GENOMIC DNA]</scope>
    <source>
        <strain>M497-1</strain>
    </source>
</reference>
<reference key="2">
    <citation type="journal article" date="1989" name="J. Biol. Chem.">
        <title>The primary structure and structural characteristics of Achromobacter lyticus protease I, a lysine-specific serine protease.</title>
        <authorList>
            <person name="Tsunasawa S."/>
            <person name="Masaki T."/>
            <person name="Hirose M."/>
            <person name="Soejima M."/>
            <person name="Sakiyama F."/>
        </authorList>
    </citation>
    <scope>PROTEIN SEQUENCE OF 206-473</scope>
    <scope>X-RAY CRYSTALLOGRAPHY (2.0 ANGSTROMS) OF 206-473</scope>
    <scope>DISULFIDE BOND</scope>
    <source>
        <strain>M497-1</strain>
    </source>
</reference>